<evidence type="ECO:0000255" key="1">
    <source>
        <dbReference type="HAMAP-Rule" id="MF_01445"/>
    </source>
</evidence>
<keyword id="KW-0012">Acyltransferase</keyword>
<keyword id="KW-0963">Cytoplasm</keyword>
<keyword id="KW-0408">Iron</keyword>
<keyword id="KW-0479">Metal-binding</keyword>
<keyword id="KW-1185">Reference proteome</keyword>
<keyword id="KW-0808">Transferase</keyword>
<keyword id="KW-0819">tRNA processing</keyword>
<name>TSAD_NEIMB</name>
<organism>
    <name type="scientific">Neisseria meningitidis serogroup B (strain ATCC BAA-335 / MC58)</name>
    <dbReference type="NCBI Taxonomy" id="122586"/>
    <lineage>
        <taxon>Bacteria</taxon>
        <taxon>Pseudomonadati</taxon>
        <taxon>Pseudomonadota</taxon>
        <taxon>Betaproteobacteria</taxon>
        <taxon>Neisseriales</taxon>
        <taxon>Neisseriaceae</taxon>
        <taxon>Neisseria</taxon>
    </lineage>
</organism>
<dbReference type="EC" id="2.3.1.234" evidence="1"/>
<dbReference type="EMBL" id="AE002098">
    <property type="protein sequence ID" value="AAF42139.1"/>
    <property type="molecule type" value="Genomic_DNA"/>
</dbReference>
<dbReference type="PIR" id="C81040">
    <property type="entry name" value="C81040"/>
</dbReference>
<dbReference type="RefSeq" id="NP_274799.1">
    <property type="nucleotide sequence ID" value="NC_003112.2"/>
</dbReference>
<dbReference type="RefSeq" id="WP_002225646.1">
    <property type="nucleotide sequence ID" value="NC_003112.2"/>
</dbReference>
<dbReference type="SMR" id="Q9JY06"/>
<dbReference type="FunCoup" id="Q9JY06">
    <property type="interactions" value="488"/>
</dbReference>
<dbReference type="STRING" id="122586.NMB1802"/>
<dbReference type="PaxDb" id="122586-NMB1802"/>
<dbReference type="DNASU" id="903296"/>
<dbReference type="KEGG" id="nme:NMB1802"/>
<dbReference type="PATRIC" id="fig|122586.8.peg.2291"/>
<dbReference type="HOGENOM" id="CLU_023208_0_0_4"/>
<dbReference type="InParanoid" id="Q9JY06"/>
<dbReference type="OrthoDB" id="9806197at2"/>
<dbReference type="Proteomes" id="UP000000425">
    <property type="component" value="Chromosome"/>
</dbReference>
<dbReference type="GO" id="GO:0005737">
    <property type="term" value="C:cytoplasm"/>
    <property type="evidence" value="ECO:0007669"/>
    <property type="project" value="UniProtKB-SubCell"/>
</dbReference>
<dbReference type="GO" id="GO:0005506">
    <property type="term" value="F:iron ion binding"/>
    <property type="evidence" value="ECO:0007669"/>
    <property type="project" value="UniProtKB-UniRule"/>
</dbReference>
<dbReference type="GO" id="GO:0061711">
    <property type="term" value="F:N(6)-L-threonylcarbamoyladenine synthase activity"/>
    <property type="evidence" value="ECO:0007669"/>
    <property type="project" value="UniProtKB-EC"/>
</dbReference>
<dbReference type="GO" id="GO:0002949">
    <property type="term" value="P:tRNA threonylcarbamoyladenosine modification"/>
    <property type="evidence" value="ECO:0007669"/>
    <property type="project" value="UniProtKB-UniRule"/>
</dbReference>
<dbReference type="CDD" id="cd24133">
    <property type="entry name" value="ASKHA_NBD_TsaD_bac"/>
    <property type="match status" value="1"/>
</dbReference>
<dbReference type="FunFam" id="3.30.420.40:FF:000040">
    <property type="entry name" value="tRNA N6-adenosine threonylcarbamoyltransferase"/>
    <property type="match status" value="1"/>
</dbReference>
<dbReference type="Gene3D" id="3.30.420.40">
    <property type="match status" value="2"/>
</dbReference>
<dbReference type="HAMAP" id="MF_01445">
    <property type="entry name" value="TsaD"/>
    <property type="match status" value="1"/>
</dbReference>
<dbReference type="InterPro" id="IPR043129">
    <property type="entry name" value="ATPase_NBD"/>
</dbReference>
<dbReference type="InterPro" id="IPR000905">
    <property type="entry name" value="Gcp-like_dom"/>
</dbReference>
<dbReference type="InterPro" id="IPR017861">
    <property type="entry name" value="KAE1/TsaD"/>
</dbReference>
<dbReference type="InterPro" id="IPR022450">
    <property type="entry name" value="TsaD"/>
</dbReference>
<dbReference type="NCBIfam" id="TIGR00329">
    <property type="entry name" value="gcp_kae1"/>
    <property type="match status" value="1"/>
</dbReference>
<dbReference type="NCBIfam" id="TIGR03723">
    <property type="entry name" value="T6A_TsaD_YgjD"/>
    <property type="match status" value="1"/>
</dbReference>
<dbReference type="PANTHER" id="PTHR11735">
    <property type="entry name" value="TRNA N6-ADENOSINE THREONYLCARBAMOYLTRANSFERASE"/>
    <property type="match status" value="1"/>
</dbReference>
<dbReference type="PANTHER" id="PTHR11735:SF6">
    <property type="entry name" value="TRNA N6-ADENOSINE THREONYLCARBAMOYLTRANSFERASE, MITOCHONDRIAL"/>
    <property type="match status" value="1"/>
</dbReference>
<dbReference type="Pfam" id="PF00814">
    <property type="entry name" value="TsaD"/>
    <property type="match status" value="1"/>
</dbReference>
<dbReference type="PRINTS" id="PR00789">
    <property type="entry name" value="OSIALOPTASE"/>
</dbReference>
<dbReference type="SUPFAM" id="SSF53067">
    <property type="entry name" value="Actin-like ATPase domain"/>
    <property type="match status" value="2"/>
</dbReference>
<comment type="function">
    <text evidence="1">Required for the formation of a threonylcarbamoyl group on adenosine at position 37 (t(6)A37) in tRNAs that read codons beginning with adenine. Is involved in the transfer of the threonylcarbamoyl moiety of threonylcarbamoyl-AMP (TC-AMP) to the N6 group of A37, together with TsaE and TsaB. TsaD likely plays a direct catalytic role in this reaction.</text>
</comment>
<comment type="catalytic activity">
    <reaction evidence="1">
        <text>L-threonylcarbamoyladenylate + adenosine(37) in tRNA = N(6)-L-threonylcarbamoyladenosine(37) in tRNA + AMP + H(+)</text>
        <dbReference type="Rhea" id="RHEA:37059"/>
        <dbReference type="Rhea" id="RHEA-COMP:10162"/>
        <dbReference type="Rhea" id="RHEA-COMP:10163"/>
        <dbReference type="ChEBI" id="CHEBI:15378"/>
        <dbReference type="ChEBI" id="CHEBI:73682"/>
        <dbReference type="ChEBI" id="CHEBI:74411"/>
        <dbReference type="ChEBI" id="CHEBI:74418"/>
        <dbReference type="ChEBI" id="CHEBI:456215"/>
        <dbReference type="EC" id="2.3.1.234"/>
    </reaction>
</comment>
<comment type="cofactor">
    <cofactor evidence="1">
        <name>Fe(2+)</name>
        <dbReference type="ChEBI" id="CHEBI:29033"/>
    </cofactor>
    <text evidence="1">Binds 1 Fe(2+) ion per subunit.</text>
</comment>
<comment type="subcellular location">
    <subcellularLocation>
        <location evidence="1">Cytoplasm</location>
    </subcellularLocation>
</comment>
<comment type="similarity">
    <text evidence="1">Belongs to the KAE1 / TsaD family.</text>
</comment>
<gene>
    <name evidence="1" type="primary">tsaD</name>
    <name type="synonym">gcp</name>
    <name type="ordered locus">NMB1802</name>
</gene>
<accession>Q9JY06</accession>
<sequence>MLVLGIESSCDETGVALYDTERGLRAHCLHTQMAMHAEYGGVVPELASRDHIRRLVPLTEGCLAQAGASYGDIDAVAFTQGPGLGGALLAGSSYANALALALDKPVIPVHHLEGHLLSPLLAEEKPDFPFVALLVSGGHTQIMAVRGIGDYALLGESVDDAAGEAFDKTAKLLGLLYPGGAKLSELAESGRFEAFVFPRPMIHSDDLQMSFSGLKTAVLTAVEKVRAENGADDIPEQTRNDICRAFQDAVVDVLAAKVKKALLQTGFRTVVVAGGVGANRKLRETFGNMTVQIPTPKGKPKHPSEKVSVFFPPTAYCTDNGAMIAFAGAMHLGKGREVGAFNVRPRWPLSEIVR</sequence>
<proteinExistence type="inferred from homology"/>
<protein>
    <recommendedName>
        <fullName evidence="1">tRNA N6-adenosine threonylcarbamoyltransferase</fullName>
        <ecNumber evidence="1">2.3.1.234</ecNumber>
    </recommendedName>
    <alternativeName>
        <fullName evidence="1">N6-L-threonylcarbamoyladenine synthase</fullName>
        <shortName evidence="1">t(6)A synthase</shortName>
    </alternativeName>
    <alternativeName>
        <fullName evidence="1">t(6)A37 threonylcarbamoyladenosine biosynthesis protein TsaD</fullName>
    </alternativeName>
    <alternativeName>
        <fullName evidence="1">tRNA threonylcarbamoyladenosine biosynthesis protein TsaD</fullName>
    </alternativeName>
</protein>
<feature type="chain" id="PRO_0000303450" description="tRNA N6-adenosine threonylcarbamoyltransferase">
    <location>
        <begin position="1"/>
        <end position="354"/>
    </location>
</feature>
<feature type="binding site" evidence="1">
    <location>
        <position position="111"/>
    </location>
    <ligand>
        <name>Fe cation</name>
        <dbReference type="ChEBI" id="CHEBI:24875"/>
    </ligand>
</feature>
<feature type="binding site" evidence="1">
    <location>
        <position position="115"/>
    </location>
    <ligand>
        <name>Fe cation</name>
        <dbReference type="ChEBI" id="CHEBI:24875"/>
    </ligand>
</feature>
<feature type="binding site" evidence="1">
    <location>
        <begin position="134"/>
        <end position="138"/>
    </location>
    <ligand>
        <name>substrate</name>
    </ligand>
</feature>
<feature type="binding site" evidence="1">
    <location>
        <position position="167"/>
    </location>
    <ligand>
        <name>substrate</name>
    </ligand>
</feature>
<feature type="binding site" evidence="1">
    <location>
        <position position="180"/>
    </location>
    <ligand>
        <name>substrate</name>
    </ligand>
</feature>
<feature type="binding site" evidence="1">
    <location>
        <position position="279"/>
    </location>
    <ligand>
        <name>substrate</name>
    </ligand>
</feature>
<feature type="binding site" evidence="1">
    <location>
        <position position="319"/>
    </location>
    <ligand>
        <name>Fe cation</name>
        <dbReference type="ChEBI" id="CHEBI:24875"/>
    </ligand>
</feature>
<reference key="1">
    <citation type="journal article" date="2000" name="Science">
        <title>Complete genome sequence of Neisseria meningitidis serogroup B strain MC58.</title>
        <authorList>
            <person name="Tettelin H."/>
            <person name="Saunders N.J."/>
            <person name="Heidelberg J.F."/>
            <person name="Jeffries A.C."/>
            <person name="Nelson K.E."/>
            <person name="Eisen J.A."/>
            <person name="Ketchum K.A."/>
            <person name="Hood D.W."/>
            <person name="Peden J.F."/>
            <person name="Dodson R.J."/>
            <person name="Nelson W.C."/>
            <person name="Gwinn M.L."/>
            <person name="DeBoy R.T."/>
            <person name="Peterson J.D."/>
            <person name="Hickey E.K."/>
            <person name="Haft D.H."/>
            <person name="Salzberg S.L."/>
            <person name="White O."/>
            <person name="Fleischmann R.D."/>
            <person name="Dougherty B.A."/>
            <person name="Mason T.M."/>
            <person name="Ciecko A."/>
            <person name="Parksey D.S."/>
            <person name="Blair E."/>
            <person name="Cittone H."/>
            <person name="Clark E.B."/>
            <person name="Cotton M.D."/>
            <person name="Utterback T.R."/>
            <person name="Khouri H.M."/>
            <person name="Qin H."/>
            <person name="Vamathevan J.J."/>
            <person name="Gill J."/>
            <person name="Scarlato V."/>
            <person name="Masignani V."/>
            <person name="Pizza M."/>
            <person name="Grandi G."/>
            <person name="Sun L."/>
            <person name="Smith H.O."/>
            <person name="Fraser C.M."/>
            <person name="Moxon E.R."/>
            <person name="Rappuoli R."/>
            <person name="Venter J.C."/>
        </authorList>
    </citation>
    <scope>NUCLEOTIDE SEQUENCE [LARGE SCALE GENOMIC DNA]</scope>
    <source>
        <strain>ATCC BAA-335 / MC58</strain>
    </source>
</reference>